<evidence type="ECO:0000255" key="1">
    <source>
        <dbReference type="HAMAP-Rule" id="MF_00636"/>
    </source>
</evidence>
<comment type="function">
    <text evidence="1">Displays ATPase and GTPase activities.</text>
</comment>
<comment type="similarity">
    <text evidence="1">Belongs to the RapZ-like family.</text>
</comment>
<proteinExistence type="inferred from homology"/>
<accession>B9DWV1</accession>
<feature type="chain" id="PRO_1000147356" description="Nucleotide-binding protein CKR_3143">
    <location>
        <begin position="1"/>
        <end position="293"/>
    </location>
</feature>
<feature type="binding site" evidence="1">
    <location>
        <begin position="8"/>
        <end position="15"/>
    </location>
    <ligand>
        <name>ATP</name>
        <dbReference type="ChEBI" id="CHEBI:30616"/>
    </ligand>
</feature>
<feature type="binding site" evidence="1">
    <location>
        <begin position="59"/>
        <end position="62"/>
    </location>
    <ligand>
        <name>GTP</name>
        <dbReference type="ChEBI" id="CHEBI:37565"/>
    </ligand>
</feature>
<dbReference type="EMBL" id="AP009049">
    <property type="protein sequence ID" value="BAH08194.1"/>
    <property type="molecule type" value="Genomic_DNA"/>
</dbReference>
<dbReference type="RefSeq" id="WP_012103887.1">
    <property type="nucleotide sequence ID" value="NC_011837.1"/>
</dbReference>
<dbReference type="SMR" id="B9DWV1"/>
<dbReference type="KEGG" id="ckr:CKR_3143"/>
<dbReference type="HOGENOM" id="CLU_059558_0_0_9"/>
<dbReference type="Proteomes" id="UP000007969">
    <property type="component" value="Chromosome"/>
</dbReference>
<dbReference type="GO" id="GO:0005524">
    <property type="term" value="F:ATP binding"/>
    <property type="evidence" value="ECO:0007669"/>
    <property type="project" value="UniProtKB-UniRule"/>
</dbReference>
<dbReference type="GO" id="GO:0005525">
    <property type="term" value="F:GTP binding"/>
    <property type="evidence" value="ECO:0007669"/>
    <property type="project" value="UniProtKB-UniRule"/>
</dbReference>
<dbReference type="Gene3D" id="3.40.50.300">
    <property type="entry name" value="P-loop containing nucleotide triphosphate hydrolases"/>
    <property type="match status" value="1"/>
</dbReference>
<dbReference type="HAMAP" id="MF_00636">
    <property type="entry name" value="RapZ_like"/>
    <property type="match status" value="1"/>
</dbReference>
<dbReference type="InterPro" id="IPR027417">
    <property type="entry name" value="P-loop_NTPase"/>
</dbReference>
<dbReference type="InterPro" id="IPR005337">
    <property type="entry name" value="RapZ-like"/>
</dbReference>
<dbReference type="InterPro" id="IPR053930">
    <property type="entry name" value="RapZ-like_N"/>
</dbReference>
<dbReference type="InterPro" id="IPR053931">
    <property type="entry name" value="RapZ_C"/>
</dbReference>
<dbReference type="NCBIfam" id="NF003828">
    <property type="entry name" value="PRK05416.1"/>
    <property type="match status" value="1"/>
</dbReference>
<dbReference type="PANTHER" id="PTHR30448">
    <property type="entry name" value="RNASE ADAPTER PROTEIN RAPZ"/>
    <property type="match status" value="1"/>
</dbReference>
<dbReference type="PANTHER" id="PTHR30448:SF0">
    <property type="entry name" value="RNASE ADAPTER PROTEIN RAPZ"/>
    <property type="match status" value="1"/>
</dbReference>
<dbReference type="Pfam" id="PF22740">
    <property type="entry name" value="PapZ_C"/>
    <property type="match status" value="1"/>
</dbReference>
<dbReference type="Pfam" id="PF03668">
    <property type="entry name" value="RapZ-like_N"/>
    <property type="match status" value="1"/>
</dbReference>
<dbReference type="PIRSF" id="PIRSF005052">
    <property type="entry name" value="P-loopkin"/>
    <property type="match status" value="1"/>
</dbReference>
<dbReference type="SUPFAM" id="SSF52540">
    <property type="entry name" value="P-loop containing nucleoside triphosphate hydrolases"/>
    <property type="match status" value="1"/>
</dbReference>
<reference key="1">
    <citation type="submission" date="2005-09" db="EMBL/GenBank/DDBJ databases">
        <title>Complete genome sequence of Clostridium kluyveri and comparative genomics of Clostridia species.</title>
        <authorList>
            <person name="Inui M."/>
            <person name="Nonaka H."/>
            <person name="Shinoda Y."/>
            <person name="Ikenaga Y."/>
            <person name="Abe M."/>
            <person name="Naito K."/>
            <person name="Vertes A.A."/>
            <person name="Yukawa H."/>
        </authorList>
    </citation>
    <scope>NUCLEOTIDE SEQUENCE [LARGE SCALE GENOMIC DNA]</scope>
    <source>
        <strain>NBRC 12016</strain>
    </source>
</reference>
<organism>
    <name type="scientific">Clostridium kluyveri (strain NBRC 12016)</name>
    <dbReference type="NCBI Taxonomy" id="583346"/>
    <lineage>
        <taxon>Bacteria</taxon>
        <taxon>Bacillati</taxon>
        <taxon>Bacillota</taxon>
        <taxon>Clostridia</taxon>
        <taxon>Eubacteriales</taxon>
        <taxon>Clostridiaceae</taxon>
        <taxon>Clostridium</taxon>
    </lineage>
</organism>
<gene>
    <name type="ordered locus">CKR_3143</name>
</gene>
<protein>
    <recommendedName>
        <fullName evidence="1">Nucleotide-binding protein CKR_3143</fullName>
    </recommendedName>
</protein>
<name>Y3143_CLOK1</name>
<sequence>MRFVIVTGLSGAGKTQAIRNLEDLGFFCVDNLPPTLIPKFAEACYQTDGKIDKIALVIDIRGGQFFDDIFESLNYLQKQGYKYEILFLDASDEVLIKRFKESRRKHPLAPDGRILNGILMERSRLREIKDRSDNIIDTSKLATRELREEITRIYSEEGQMETQLIVTVLSFGFKYGIPVDSDLVFDVRFLPNPFYIPELKNHSGRDKIVVDYIMDFKETVKFIDKLEDMLEFLIPNYLKEGKRQLIVSIGCTGGRHRSVTIANTIYNRLKDNGHRVNIDHRDIEEDIKGGKKL</sequence>
<keyword id="KW-0067">ATP-binding</keyword>
<keyword id="KW-0342">GTP-binding</keyword>
<keyword id="KW-0547">Nucleotide-binding</keyword>